<evidence type="ECO:0000255" key="1"/>
<evidence type="ECO:0000305" key="2"/>
<protein>
    <recommendedName>
        <fullName>Uncharacterized protein YPR064W</fullName>
    </recommendedName>
</protein>
<keyword id="KW-0472">Membrane</keyword>
<keyword id="KW-1185">Reference proteome</keyword>
<keyword id="KW-0812">Transmembrane</keyword>
<keyword id="KW-1133">Transmembrane helix</keyword>
<accession>Q12492</accession>
<accession>A0A1S0T0C9</accession>
<dbReference type="EMBL" id="Z49219">
    <property type="protein sequence ID" value="CAA89181.1"/>
    <property type="molecule type" value="Genomic_DNA"/>
</dbReference>
<dbReference type="EMBL" id="Z71255">
    <property type="protein sequence ID" value="CAA94972.1"/>
    <property type="molecule type" value="Genomic_DNA"/>
</dbReference>
<dbReference type="EMBL" id="BK006949">
    <property type="protein sequence ID" value="DAA80346.1"/>
    <property type="molecule type" value="Genomic_DNA"/>
</dbReference>
<dbReference type="PIR" id="S54085">
    <property type="entry name" value="S54085"/>
</dbReference>
<dbReference type="RefSeq" id="NP_001335826.1">
    <property type="nucleotide sequence ID" value="NM_001348888.1"/>
</dbReference>
<dbReference type="FunCoup" id="Q12492">
    <property type="interactions" value="206"/>
</dbReference>
<dbReference type="IntAct" id="Q12492">
    <property type="interactions" value="2"/>
</dbReference>
<dbReference type="MINT" id="Q12492"/>
<dbReference type="STRING" id="4932.YPR064W"/>
<dbReference type="PaxDb" id="4932-YPR064W"/>
<dbReference type="EnsemblFungi" id="YPR064W_mRNA">
    <property type="protein sequence ID" value="YPR064W"/>
    <property type="gene ID" value="YPR064W"/>
</dbReference>
<dbReference type="GeneID" id="856177"/>
<dbReference type="AGR" id="SGD:S000006268"/>
<dbReference type="SGD" id="S000006268">
    <property type="gene designation" value="YPR064W"/>
</dbReference>
<dbReference type="HOGENOM" id="CLU_1846702_0_0_1"/>
<dbReference type="InParanoid" id="Q12492"/>
<dbReference type="PRO" id="PR:Q12492"/>
<dbReference type="Proteomes" id="UP000002311">
    <property type="component" value="Chromosome XVI"/>
</dbReference>
<dbReference type="RNAct" id="Q12492">
    <property type="molecule type" value="protein"/>
</dbReference>
<dbReference type="GO" id="GO:0016020">
    <property type="term" value="C:membrane"/>
    <property type="evidence" value="ECO:0007669"/>
    <property type="project" value="UniProtKB-SubCell"/>
</dbReference>
<organism>
    <name type="scientific">Saccharomyces cerevisiae (strain ATCC 204508 / S288c)</name>
    <name type="common">Baker's yeast</name>
    <dbReference type="NCBI Taxonomy" id="559292"/>
    <lineage>
        <taxon>Eukaryota</taxon>
        <taxon>Fungi</taxon>
        <taxon>Dikarya</taxon>
        <taxon>Ascomycota</taxon>
        <taxon>Saccharomycotina</taxon>
        <taxon>Saccharomycetes</taxon>
        <taxon>Saccharomycetales</taxon>
        <taxon>Saccharomycetaceae</taxon>
        <taxon>Saccharomyces</taxon>
    </lineage>
</organism>
<name>YP064_YEAST</name>
<comment type="subcellular location">
    <subcellularLocation>
        <location evidence="2">Membrane</location>
        <topology evidence="2">Multi-pass membrane protein</topology>
    </subcellularLocation>
</comment>
<reference key="1">
    <citation type="journal article" date="1997" name="Nature">
        <title>The nucleotide sequence of Saccharomyces cerevisiae chromosome XVI.</title>
        <authorList>
            <person name="Bussey H."/>
            <person name="Storms R.K."/>
            <person name="Ahmed A."/>
            <person name="Albermann K."/>
            <person name="Allen E."/>
            <person name="Ansorge W."/>
            <person name="Araujo R."/>
            <person name="Aparicio A."/>
            <person name="Barrell B.G."/>
            <person name="Badcock K."/>
            <person name="Benes V."/>
            <person name="Botstein D."/>
            <person name="Bowman S."/>
            <person name="Brueckner M."/>
            <person name="Carpenter J."/>
            <person name="Cherry J.M."/>
            <person name="Chung E."/>
            <person name="Churcher C.M."/>
            <person name="Coster F."/>
            <person name="Davis K."/>
            <person name="Davis R.W."/>
            <person name="Dietrich F.S."/>
            <person name="Delius H."/>
            <person name="DiPaolo T."/>
            <person name="Dubois E."/>
            <person name="Duesterhoeft A."/>
            <person name="Duncan M."/>
            <person name="Floeth M."/>
            <person name="Fortin N."/>
            <person name="Friesen J.D."/>
            <person name="Fritz C."/>
            <person name="Goffeau A."/>
            <person name="Hall J."/>
            <person name="Hebling U."/>
            <person name="Heumann K."/>
            <person name="Hilbert H."/>
            <person name="Hillier L.W."/>
            <person name="Hunicke-Smith S."/>
            <person name="Hyman R.W."/>
            <person name="Johnston M."/>
            <person name="Kalman S."/>
            <person name="Kleine K."/>
            <person name="Komp C."/>
            <person name="Kurdi O."/>
            <person name="Lashkari D."/>
            <person name="Lew H."/>
            <person name="Lin A."/>
            <person name="Lin D."/>
            <person name="Louis E.J."/>
            <person name="Marathe R."/>
            <person name="Messenguy F."/>
            <person name="Mewes H.-W."/>
            <person name="Mirtipati S."/>
            <person name="Moestl D."/>
            <person name="Mueller-Auer S."/>
            <person name="Namath A."/>
            <person name="Nentwich U."/>
            <person name="Oefner P."/>
            <person name="Pearson D."/>
            <person name="Petel F.X."/>
            <person name="Pohl T.M."/>
            <person name="Purnelle B."/>
            <person name="Rajandream M.A."/>
            <person name="Rechmann S."/>
            <person name="Rieger M."/>
            <person name="Riles L."/>
            <person name="Roberts D."/>
            <person name="Schaefer M."/>
            <person name="Scharfe M."/>
            <person name="Scherens B."/>
            <person name="Schramm S."/>
            <person name="Schroeder M."/>
            <person name="Sdicu A.-M."/>
            <person name="Tettelin H."/>
            <person name="Urrestarazu L.A."/>
            <person name="Ushinsky S."/>
            <person name="Vierendeels F."/>
            <person name="Vissers S."/>
            <person name="Voss H."/>
            <person name="Walsh S.V."/>
            <person name="Wambutt R."/>
            <person name="Wang Y."/>
            <person name="Wedler E."/>
            <person name="Wedler H."/>
            <person name="Winnett E."/>
            <person name="Zhong W.-W."/>
            <person name="Zollner A."/>
            <person name="Vo D.H."/>
            <person name="Hani J."/>
        </authorList>
    </citation>
    <scope>NUCLEOTIDE SEQUENCE [LARGE SCALE GENOMIC DNA]</scope>
    <source>
        <strain>ATCC 204508 / S288c</strain>
    </source>
</reference>
<reference key="2">
    <citation type="journal article" date="2014" name="G3 (Bethesda)">
        <title>The reference genome sequence of Saccharomyces cerevisiae: Then and now.</title>
        <authorList>
            <person name="Engel S.R."/>
            <person name="Dietrich F.S."/>
            <person name="Fisk D.G."/>
            <person name="Binkley G."/>
            <person name="Balakrishnan R."/>
            <person name="Costanzo M.C."/>
            <person name="Dwight S.S."/>
            <person name="Hitz B.C."/>
            <person name="Karra K."/>
            <person name="Nash R.S."/>
            <person name="Weng S."/>
            <person name="Wong E.D."/>
            <person name="Lloyd P."/>
            <person name="Skrzypek M.S."/>
            <person name="Miyasato S.R."/>
            <person name="Simison M."/>
            <person name="Cherry J.M."/>
        </authorList>
    </citation>
    <scope>GENOME REANNOTATION</scope>
    <source>
        <strain>ATCC 204508 / S288c</strain>
    </source>
</reference>
<feature type="chain" id="PRO_0000299819" description="Uncharacterized protein YPR064W">
    <location>
        <begin position="1"/>
        <end position="139"/>
    </location>
</feature>
<feature type="transmembrane region" description="Helical" evidence="1">
    <location>
        <begin position="35"/>
        <end position="55"/>
    </location>
</feature>
<feature type="transmembrane region" description="Helical" evidence="1">
    <location>
        <begin position="119"/>
        <end position="139"/>
    </location>
</feature>
<proteinExistence type="predicted"/>
<gene>
    <name type="ordered locus">YPR064W</name>
    <name type="ORF">YP9499.19</name>
</gene>
<sequence length="139" mass="15661">MKSCVLSNYVEGLEIIVCGYRNRLLFPFRATQVQAYFKVFSFFFFLLLTLGAAAAAKPTSERQVIFGSADKSPGYHWPVEVSAAWNYRELLCKTIGNLVGKPCSRTWRLLTKKKRAYCCCLFCCSSSYCLAGVLCVFCV</sequence>